<organism>
    <name type="scientific">Bacillus subtilis (strain 168)</name>
    <dbReference type="NCBI Taxonomy" id="224308"/>
    <lineage>
        <taxon>Bacteria</taxon>
        <taxon>Bacillati</taxon>
        <taxon>Bacillota</taxon>
        <taxon>Bacilli</taxon>
        <taxon>Bacillales</taxon>
        <taxon>Bacillaceae</taxon>
        <taxon>Bacillus</taxon>
    </lineage>
</organism>
<keyword id="KW-1185">Reference proteome</keyword>
<dbReference type="EMBL" id="D26185">
    <property type="protein sequence ID" value="BAA05194.1"/>
    <property type="molecule type" value="Genomic_DNA"/>
</dbReference>
<dbReference type="EMBL" id="AL009126">
    <property type="protein sequence ID" value="CAB16100.1"/>
    <property type="molecule type" value="Genomic_DNA"/>
</dbReference>
<dbReference type="PIR" id="S65988">
    <property type="entry name" value="S65988"/>
</dbReference>
<dbReference type="RefSeq" id="WP_003244492.1">
    <property type="nucleotide sequence ID" value="NZ_OZ025638.1"/>
</dbReference>
<dbReference type="FunCoup" id="P37495">
    <property type="interactions" value="5"/>
</dbReference>
<dbReference type="STRING" id="224308.BSU40630"/>
<dbReference type="PaxDb" id="224308-BSU40630"/>
<dbReference type="EnsemblBacteria" id="CAB16100">
    <property type="protein sequence ID" value="CAB16100"/>
    <property type="gene ID" value="BSU_40630"/>
</dbReference>
<dbReference type="GeneID" id="937811"/>
<dbReference type="KEGG" id="bsu:BSU40630"/>
<dbReference type="PATRIC" id="fig|224308.179.peg.4405"/>
<dbReference type="eggNOG" id="ENOG502Z8AS">
    <property type="taxonomic scope" value="Bacteria"/>
</dbReference>
<dbReference type="InParanoid" id="P37495"/>
<dbReference type="OrthoDB" id="1653343at2"/>
<dbReference type="BioCyc" id="BSUB:BSU40630-MONOMER"/>
<dbReference type="Proteomes" id="UP000001570">
    <property type="component" value="Chromosome"/>
</dbReference>
<dbReference type="InterPro" id="IPR028994">
    <property type="entry name" value="Integrin_alpha_N"/>
</dbReference>
<dbReference type="SUPFAM" id="SSF69318">
    <property type="entry name" value="Integrin alpha N-terminal domain"/>
    <property type="match status" value="1"/>
</dbReference>
<protein>
    <recommendedName>
        <fullName>Uncharacterized protein YybI</fullName>
    </recommendedName>
</protein>
<proteinExistence type="predicted"/>
<accession>P37495</accession>
<gene>
    <name type="primary">yybI</name>
    <name type="ordered locus">BSU40630</name>
</gene>
<feature type="chain" id="PRO_0000050065" description="Uncharacterized protein YybI">
    <location>
        <begin position="1"/>
        <end position="262"/>
    </location>
</feature>
<reference key="1">
    <citation type="journal article" date="1994" name="DNA Res.">
        <title>Systematic sequencing of the 180 kilobase region of the Bacillus subtilis chromosome containing the replication origin.</title>
        <authorList>
            <person name="Ogasawara N."/>
            <person name="Nakai S."/>
            <person name="Yoshikawa H."/>
        </authorList>
    </citation>
    <scope>NUCLEOTIDE SEQUENCE [GENOMIC DNA]</scope>
    <source>
        <strain>168</strain>
    </source>
</reference>
<reference key="2">
    <citation type="journal article" date="1997" name="Nature">
        <title>The complete genome sequence of the Gram-positive bacterium Bacillus subtilis.</title>
        <authorList>
            <person name="Kunst F."/>
            <person name="Ogasawara N."/>
            <person name="Moszer I."/>
            <person name="Albertini A.M."/>
            <person name="Alloni G."/>
            <person name="Azevedo V."/>
            <person name="Bertero M.G."/>
            <person name="Bessieres P."/>
            <person name="Bolotin A."/>
            <person name="Borchert S."/>
            <person name="Borriss R."/>
            <person name="Boursier L."/>
            <person name="Brans A."/>
            <person name="Braun M."/>
            <person name="Brignell S.C."/>
            <person name="Bron S."/>
            <person name="Brouillet S."/>
            <person name="Bruschi C.V."/>
            <person name="Caldwell B."/>
            <person name="Capuano V."/>
            <person name="Carter N.M."/>
            <person name="Choi S.-K."/>
            <person name="Codani J.-J."/>
            <person name="Connerton I.F."/>
            <person name="Cummings N.J."/>
            <person name="Daniel R.A."/>
            <person name="Denizot F."/>
            <person name="Devine K.M."/>
            <person name="Duesterhoeft A."/>
            <person name="Ehrlich S.D."/>
            <person name="Emmerson P.T."/>
            <person name="Entian K.-D."/>
            <person name="Errington J."/>
            <person name="Fabret C."/>
            <person name="Ferrari E."/>
            <person name="Foulger D."/>
            <person name="Fritz C."/>
            <person name="Fujita M."/>
            <person name="Fujita Y."/>
            <person name="Fuma S."/>
            <person name="Galizzi A."/>
            <person name="Galleron N."/>
            <person name="Ghim S.-Y."/>
            <person name="Glaser P."/>
            <person name="Goffeau A."/>
            <person name="Golightly E.J."/>
            <person name="Grandi G."/>
            <person name="Guiseppi G."/>
            <person name="Guy B.J."/>
            <person name="Haga K."/>
            <person name="Haiech J."/>
            <person name="Harwood C.R."/>
            <person name="Henaut A."/>
            <person name="Hilbert H."/>
            <person name="Holsappel S."/>
            <person name="Hosono S."/>
            <person name="Hullo M.-F."/>
            <person name="Itaya M."/>
            <person name="Jones L.-M."/>
            <person name="Joris B."/>
            <person name="Karamata D."/>
            <person name="Kasahara Y."/>
            <person name="Klaerr-Blanchard M."/>
            <person name="Klein C."/>
            <person name="Kobayashi Y."/>
            <person name="Koetter P."/>
            <person name="Koningstein G."/>
            <person name="Krogh S."/>
            <person name="Kumano M."/>
            <person name="Kurita K."/>
            <person name="Lapidus A."/>
            <person name="Lardinois S."/>
            <person name="Lauber J."/>
            <person name="Lazarevic V."/>
            <person name="Lee S.-M."/>
            <person name="Levine A."/>
            <person name="Liu H."/>
            <person name="Masuda S."/>
            <person name="Mauel C."/>
            <person name="Medigue C."/>
            <person name="Medina N."/>
            <person name="Mellado R.P."/>
            <person name="Mizuno M."/>
            <person name="Moestl D."/>
            <person name="Nakai S."/>
            <person name="Noback M."/>
            <person name="Noone D."/>
            <person name="O'Reilly M."/>
            <person name="Ogawa K."/>
            <person name="Ogiwara A."/>
            <person name="Oudega B."/>
            <person name="Park S.-H."/>
            <person name="Parro V."/>
            <person name="Pohl T.M."/>
            <person name="Portetelle D."/>
            <person name="Porwollik S."/>
            <person name="Prescott A.M."/>
            <person name="Presecan E."/>
            <person name="Pujic P."/>
            <person name="Purnelle B."/>
            <person name="Rapoport G."/>
            <person name="Rey M."/>
            <person name="Reynolds S."/>
            <person name="Rieger M."/>
            <person name="Rivolta C."/>
            <person name="Rocha E."/>
            <person name="Roche B."/>
            <person name="Rose M."/>
            <person name="Sadaie Y."/>
            <person name="Sato T."/>
            <person name="Scanlan E."/>
            <person name="Schleich S."/>
            <person name="Schroeter R."/>
            <person name="Scoffone F."/>
            <person name="Sekiguchi J."/>
            <person name="Sekowska A."/>
            <person name="Seror S.J."/>
            <person name="Serror P."/>
            <person name="Shin B.-S."/>
            <person name="Soldo B."/>
            <person name="Sorokin A."/>
            <person name="Tacconi E."/>
            <person name="Takagi T."/>
            <person name="Takahashi H."/>
            <person name="Takemaru K."/>
            <person name="Takeuchi M."/>
            <person name="Tamakoshi A."/>
            <person name="Tanaka T."/>
            <person name="Terpstra P."/>
            <person name="Tognoni A."/>
            <person name="Tosato V."/>
            <person name="Uchiyama S."/>
            <person name="Vandenbol M."/>
            <person name="Vannier F."/>
            <person name="Vassarotti A."/>
            <person name="Viari A."/>
            <person name="Wambutt R."/>
            <person name="Wedler E."/>
            <person name="Wedler H."/>
            <person name="Weitzenegger T."/>
            <person name="Winters P."/>
            <person name="Wipat A."/>
            <person name="Yamamoto H."/>
            <person name="Yamane K."/>
            <person name="Yasumoto K."/>
            <person name="Yata K."/>
            <person name="Yoshida K."/>
            <person name="Yoshikawa H.-F."/>
            <person name="Zumstein E."/>
            <person name="Yoshikawa H."/>
            <person name="Danchin A."/>
        </authorList>
    </citation>
    <scope>NUCLEOTIDE SEQUENCE [LARGE SCALE GENOMIC DNA]</scope>
    <source>
        <strain>168</strain>
    </source>
</reference>
<sequence>MNVYDIRMAPYWFYEGRGLVQHPYVFRQPVSSRAIIVSTRGDVTGDGVIDEVFLTGNQMPGSPLWRNITLVIRDGRTHQEQRIQLQNNMGYNPSLFLGDMTGDKIEDVAVVMDTGGSGGAIYAYVFAYLNRQFRRIFNSDVLNDELKYSVRYQNQYKASVISHQQNETYILDLTYKGREYLNEIYNSQGVLKMPIEGWVNPLSGLYPVDFDRDGVYELLAYQRIAGRYNADSLGYVQTVLKWNGQRFMFNRQTVTIFGSDLS</sequence>
<name>YYBI_BACSU</name>